<organism>
    <name type="scientific">Haliotis asinina</name>
    <name type="common">Donkey's ear abalone</name>
    <name type="synonym">Ass's ear abalone</name>
    <dbReference type="NCBI Taxonomy" id="109174"/>
    <lineage>
        <taxon>Eukaryota</taxon>
        <taxon>Metazoa</taxon>
        <taxon>Spiralia</taxon>
        <taxon>Lophotrochozoa</taxon>
        <taxon>Mollusca</taxon>
        <taxon>Gastropoda</taxon>
        <taxon>Vetigastropoda</taxon>
        <taxon>Lepetellida</taxon>
        <taxon>Haliotoidea</taxon>
        <taxon>Haliotidae</taxon>
        <taxon>Haliotis</taxon>
    </lineage>
</organism>
<evidence type="ECO:0000250" key="1">
    <source>
        <dbReference type="UniProtKB" id="P84811"/>
    </source>
</evidence>
<evidence type="ECO:0000255" key="2"/>
<evidence type="ECO:0000255" key="3">
    <source>
        <dbReference type="PROSITE-ProRule" id="PRU00722"/>
    </source>
</evidence>
<evidence type="ECO:0000269" key="4">
    <source>
    </source>
</evidence>
<evidence type="ECO:0000269" key="5">
    <source>
    </source>
</evidence>
<evidence type="ECO:0000305" key="6"/>
<sequence>LILCVVVCTAAVLGTAAGYESQLPGCPPGAYPAICARYCYSDRDCASGYYCCNTGCLNICVPKPKPGLCPSITQSPCRGNVCNNDQDCPGNRKCCGKPGCKRCYRPKKPGSCPARKYEAGPCVVYCDGDFDCPGDKKCCGGCPRLCEKPCYD</sequence>
<feature type="signal peptide" evidence="2">
    <location>
        <begin position="1" status="less than"/>
        <end position="18"/>
    </location>
</feature>
<feature type="chain" id="PRO_0000399445" description="Perlwapin" evidence="2">
    <location>
        <begin position="19"/>
        <end position="152"/>
    </location>
</feature>
<feature type="domain" description="WAP 1" evidence="3">
    <location>
        <begin position="19"/>
        <end position="61"/>
    </location>
</feature>
<feature type="domain" description="WAP 2; atypical" evidence="3">
    <location>
        <begin position="62"/>
        <end position="107"/>
    </location>
</feature>
<feature type="domain" description="WAP 3" evidence="3">
    <location>
        <begin position="108"/>
        <end position="150"/>
    </location>
</feature>
<feature type="disulfide bond" evidence="3">
    <location>
        <begin position="26"/>
        <end position="52"/>
    </location>
</feature>
<feature type="disulfide bond" evidence="3">
    <location>
        <begin position="35"/>
        <end position="56"/>
    </location>
</feature>
<feature type="disulfide bond" evidence="3">
    <location>
        <begin position="39"/>
        <end position="51"/>
    </location>
</feature>
<feature type="disulfide bond" evidence="3">
    <location>
        <begin position="45"/>
        <end position="60"/>
    </location>
</feature>
<feature type="disulfide bond" evidence="3">
    <location>
        <begin position="69"/>
        <end position="95"/>
    </location>
</feature>
<feature type="disulfide bond" evidence="1 3">
    <location>
        <begin position="77"/>
        <end position="100"/>
    </location>
</feature>
<feature type="disulfide bond" evidence="3">
    <location>
        <begin position="82"/>
        <end position="94"/>
    </location>
</feature>
<feature type="disulfide bond" evidence="3">
    <location>
        <begin position="88"/>
        <end position="103"/>
    </location>
</feature>
<feature type="disulfide bond" evidence="3">
    <location>
        <begin position="112"/>
        <end position="139"/>
    </location>
</feature>
<feature type="disulfide bond" evidence="3">
    <location>
        <begin position="122"/>
        <end position="142"/>
    </location>
</feature>
<feature type="disulfide bond" evidence="3">
    <location>
        <begin position="126"/>
        <end position="138"/>
    </location>
</feature>
<feature type="disulfide bond" evidence="3">
    <location>
        <begin position="132"/>
        <end position="146"/>
    </location>
</feature>
<feature type="non-terminal residue" evidence="6">
    <location>
        <position position="1"/>
    </location>
</feature>
<name>PWAP_HALAI</name>
<accession>P86730</accession>
<protein>
    <recommendedName>
        <fullName evidence="1">Perlwapin</fullName>
    </recommendedName>
</protein>
<comment type="function">
    <text evidence="1">Inhibits growth of calcium carbonate crystals. May inhibit growth of certain crystallographic planes in the mineral phase of nacre in the shell (By similarity).</text>
</comment>
<comment type="subcellular location">
    <subcellularLocation>
        <location evidence="5">Secreted</location>
    </subcellularLocation>
</comment>
<comment type="tissue specificity">
    <text evidence="5">Component of the acid-soluble and acid-insoluble organic matrix of prismatic shell layers (at protein level).</text>
</comment>
<dbReference type="EMBL" id="DW986256">
    <property type="status" value="NOT_ANNOTATED_CDS"/>
    <property type="molecule type" value="mRNA"/>
</dbReference>
<dbReference type="SMR" id="P86730"/>
<dbReference type="GO" id="GO:0005576">
    <property type="term" value="C:extracellular region"/>
    <property type="evidence" value="ECO:0000314"/>
    <property type="project" value="UniProtKB"/>
</dbReference>
<dbReference type="GO" id="GO:0005615">
    <property type="term" value="C:extracellular space"/>
    <property type="evidence" value="ECO:0007669"/>
    <property type="project" value="TreeGrafter"/>
</dbReference>
<dbReference type="GO" id="GO:0004867">
    <property type="term" value="F:serine-type endopeptidase inhibitor activity"/>
    <property type="evidence" value="ECO:0007669"/>
    <property type="project" value="TreeGrafter"/>
</dbReference>
<dbReference type="Gene3D" id="4.10.75.10">
    <property type="entry name" value="Elafin-like"/>
    <property type="match status" value="3"/>
</dbReference>
<dbReference type="InterPro" id="IPR036645">
    <property type="entry name" value="Elafin-like_sf"/>
</dbReference>
<dbReference type="InterPro" id="IPR008197">
    <property type="entry name" value="WAP_dom"/>
</dbReference>
<dbReference type="InterPro" id="IPR050514">
    <property type="entry name" value="WAP_four-disulfide_core"/>
</dbReference>
<dbReference type="PANTHER" id="PTHR19441:SF95">
    <property type="entry name" value="PERLWAPIN ISOFORM X1"/>
    <property type="match status" value="1"/>
</dbReference>
<dbReference type="PANTHER" id="PTHR19441">
    <property type="entry name" value="WHEY ACDIC PROTEIN WAP"/>
    <property type="match status" value="1"/>
</dbReference>
<dbReference type="Pfam" id="PF00095">
    <property type="entry name" value="WAP"/>
    <property type="match status" value="3"/>
</dbReference>
<dbReference type="PRINTS" id="PR00003">
    <property type="entry name" value="4DISULPHCORE"/>
</dbReference>
<dbReference type="SMART" id="SM00217">
    <property type="entry name" value="WAP"/>
    <property type="match status" value="2"/>
</dbReference>
<dbReference type="SUPFAM" id="SSF57256">
    <property type="entry name" value="Elafin-like"/>
    <property type="match status" value="2"/>
</dbReference>
<dbReference type="PROSITE" id="PS51390">
    <property type="entry name" value="WAP"/>
    <property type="match status" value="3"/>
</dbReference>
<reference evidence="6" key="1">
    <citation type="journal article" date="2006" name="BMC Biol.">
        <title>A rapidly evolving secretome builds and patterns a sea shell.</title>
        <authorList>
            <person name="Jackson D.J."/>
            <person name="McDougall C."/>
            <person name="Green K."/>
            <person name="Simpson F."/>
            <person name="Woerheide G."/>
            <person name="Degnan B.M."/>
        </authorList>
    </citation>
    <scope>NUCLEOTIDE SEQUENCE [MRNA]</scope>
    <source>
        <tissue evidence="4">Mantle</tissue>
    </source>
</reference>
<reference evidence="6" key="2">
    <citation type="journal article" date="2010" name="Proteome Sci.">
        <title>Proteomic analysis of the organic matrix of the abalone Haliotis asinina calcified shell.</title>
        <authorList>
            <person name="Marie B."/>
            <person name="Marie A."/>
            <person name="Jackson D.J."/>
            <person name="Dubost L."/>
            <person name="Degnan B.M."/>
            <person name="Milet C."/>
            <person name="Marin F."/>
        </authorList>
    </citation>
    <scope>PROTEIN SEQUENCE OF 79-92 AND 138-152</scope>
    <scope>SUBCELLULAR LOCATION</scope>
    <scope>TISSUE SPECIFICITY</scope>
    <source>
        <tissue evidence="5">Shell</tissue>
    </source>
</reference>
<proteinExistence type="evidence at protein level"/>
<keyword id="KW-0903">Direct protein sequencing</keyword>
<keyword id="KW-1015">Disulfide bond</keyword>
<keyword id="KW-0677">Repeat</keyword>
<keyword id="KW-0964">Secreted</keyword>
<keyword id="KW-0732">Signal</keyword>